<protein>
    <recommendedName>
        <fullName evidence="1">Chaperone protein DnaJ</fullName>
    </recommendedName>
</protein>
<proteinExistence type="inferred from homology"/>
<accession>Q7N8Y3</accession>
<gene>
    <name evidence="1" type="primary">dnaJ</name>
    <name type="ordered locus">plu0580</name>
</gene>
<organism>
    <name type="scientific">Photorhabdus laumondii subsp. laumondii (strain DSM 15139 / CIP 105565 / TT01)</name>
    <name type="common">Photorhabdus luminescens subsp. laumondii</name>
    <dbReference type="NCBI Taxonomy" id="243265"/>
    <lineage>
        <taxon>Bacteria</taxon>
        <taxon>Pseudomonadati</taxon>
        <taxon>Pseudomonadota</taxon>
        <taxon>Gammaproteobacteria</taxon>
        <taxon>Enterobacterales</taxon>
        <taxon>Morganellaceae</taxon>
        <taxon>Photorhabdus</taxon>
    </lineage>
</organism>
<keyword id="KW-0143">Chaperone</keyword>
<keyword id="KW-0963">Cytoplasm</keyword>
<keyword id="KW-0235">DNA replication</keyword>
<keyword id="KW-0479">Metal-binding</keyword>
<keyword id="KW-1185">Reference proteome</keyword>
<keyword id="KW-0677">Repeat</keyword>
<keyword id="KW-0346">Stress response</keyword>
<keyword id="KW-0862">Zinc</keyword>
<keyword id="KW-0863">Zinc-finger</keyword>
<evidence type="ECO:0000255" key="1">
    <source>
        <dbReference type="HAMAP-Rule" id="MF_01152"/>
    </source>
</evidence>
<comment type="function">
    <text evidence="1">Participates actively in the response to hyperosmotic and heat shock by preventing the aggregation of stress-denatured proteins and by disaggregating proteins, also in an autonomous, DnaK-independent fashion. Unfolded proteins bind initially to DnaJ; upon interaction with the DnaJ-bound protein, DnaK hydrolyzes its bound ATP, resulting in the formation of a stable complex. GrpE releases ADP from DnaK; ATP binding to DnaK triggers the release of the substrate protein, thus completing the reaction cycle. Several rounds of ATP-dependent interactions between DnaJ, DnaK and GrpE are required for fully efficient folding. Also involved, together with DnaK and GrpE, in the DNA replication of plasmids through activation of initiation proteins.</text>
</comment>
<comment type="cofactor">
    <cofactor evidence="1">
        <name>Zn(2+)</name>
        <dbReference type="ChEBI" id="CHEBI:29105"/>
    </cofactor>
    <text evidence="1">Binds 2 Zn(2+) ions per monomer.</text>
</comment>
<comment type="subunit">
    <text evidence="1">Homodimer.</text>
</comment>
<comment type="subcellular location">
    <subcellularLocation>
        <location evidence="1">Cytoplasm</location>
    </subcellularLocation>
</comment>
<comment type="domain">
    <text evidence="1">The J domain is necessary and sufficient to stimulate DnaK ATPase activity. Zinc center 1 plays an important role in the autonomous, DnaK-independent chaperone activity of DnaJ. Zinc center 2 is essential for interaction with DnaK and for DnaJ activity.</text>
</comment>
<comment type="similarity">
    <text evidence="1">Belongs to the DnaJ family.</text>
</comment>
<reference key="1">
    <citation type="journal article" date="2003" name="Nat. Biotechnol.">
        <title>The genome sequence of the entomopathogenic bacterium Photorhabdus luminescens.</title>
        <authorList>
            <person name="Duchaud E."/>
            <person name="Rusniok C."/>
            <person name="Frangeul L."/>
            <person name="Buchrieser C."/>
            <person name="Givaudan A."/>
            <person name="Taourit S."/>
            <person name="Bocs S."/>
            <person name="Boursaux-Eude C."/>
            <person name="Chandler M."/>
            <person name="Charles J.-F."/>
            <person name="Dassa E."/>
            <person name="Derose R."/>
            <person name="Derzelle S."/>
            <person name="Freyssinet G."/>
            <person name="Gaudriault S."/>
            <person name="Medigue C."/>
            <person name="Lanois A."/>
            <person name="Powell K."/>
            <person name="Siguier P."/>
            <person name="Vincent R."/>
            <person name="Wingate V."/>
            <person name="Zouine M."/>
            <person name="Glaser P."/>
            <person name="Boemare N."/>
            <person name="Danchin A."/>
            <person name="Kunst F."/>
        </authorList>
    </citation>
    <scope>NUCLEOTIDE SEQUENCE [LARGE SCALE GENOMIC DNA]</scope>
    <source>
        <strain>DSM 15139 / CIP 105565 / TT01</strain>
    </source>
</reference>
<name>DNAJ_PHOLL</name>
<dbReference type="EMBL" id="BX571860">
    <property type="protein sequence ID" value="CAE12875.1"/>
    <property type="molecule type" value="Genomic_DNA"/>
</dbReference>
<dbReference type="RefSeq" id="WP_011144959.1">
    <property type="nucleotide sequence ID" value="NC_005126.1"/>
</dbReference>
<dbReference type="SMR" id="Q7N8Y3"/>
<dbReference type="STRING" id="243265.plu0580"/>
<dbReference type="GeneID" id="48846867"/>
<dbReference type="KEGG" id="plu:plu0580"/>
<dbReference type="eggNOG" id="COG0484">
    <property type="taxonomic scope" value="Bacteria"/>
</dbReference>
<dbReference type="HOGENOM" id="CLU_017633_0_7_6"/>
<dbReference type="OrthoDB" id="9779889at2"/>
<dbReference type="Proteomes" id="UP000002514">
    <property type="component" value="Chromosome"/>
</dbReference>
<dbReference type="GO" id="GO:0005737">
    <property type="term" value="C:cytoplasm"/>
    <property type="evidence" value="ECO:0007669"/>
    <property type="project" value="UniProtKB-SubCell"/>
</dbReference>
<dbReference type="GO" id="GO:0005524">
    <property type="term" value="F:ATP binding"/>
    <property type="evidence" value="ECO:0007669"/>
    <property type="project" value="InterPro"/>
</dbReference>
<dbReference type="GO" id="GO:0031072">
    <property type="term" value="F:heat shock protein binding"/>
    <property type="evidence" value="ECO:0007669"/>
    <property type="project" value="InterPro"/>
</dbReference>
<dbReference type="GO" id="GO:0051082">
    <property type="term" value="F:unfolded protein binding"/>
    <property type="evidence" value="ECO:0007669"/>
    <property type="project" value="UniProtKB-UniRule"/>
</dbReference>
<dbReference type="GO" id="GO:0008270">
    <property type="term" value="F:zinc ion binding"/>
    <property type="evidence" value="ECO:0007669"/>
    <property type="project" value="UniProtKB-UniRule"/>
</dbReference>
<dbReference type="GO" id="GO:0051085">
    <property type="term" value="P:chaperone cofactor-dependent protein refolding"/>
    <property type="evidence" value="ECO:0007669"/>
    <property type="project" value="TreeGrafter"/>
</dbReference>
<dbReference type="GO" id="GO:0006260">
    <property type="term" value="P:DNA replication"/>
    <property type="evidence" value="ECO:0007669"/>
    <property type="project" value="UniProtKB-KW"/>
</dbReference>
<dbReference type="GO" id="GO:0042026">
    <property type="term" value="P:protein refolding"/>
    <property type="evidence" value="ECO:0007669"/>
    <property type="project" value="TreeGrafter"/>
</dbReference>
<dbReference type="GO" id="GO:0009408">
    <property type="term" value="P:response to heat"/>
    <property type="evidence" value="ECO:0007669"/>
    <property type="project" value="InterPro"/>
</dbReference>
<dbReference type="CDD" id="cd06257">
    <property type="entry name" value="DnaJ"/>
    <property type="match status" value="1"/>
</dbReference>
<dbReference type="CDD" id="cd10747">
    <property type="entry name" value="DnaJ_C"/>
    <property type="match status" value="1"/>
</dbReference>
<dbReference type="CDD" id="cd10719">
    <property type="entry name" value="DnaJ_zf"/>
    <property type="match status" value="1"/>
</dbReference>
<dbReference type="FunFam" id="1.10.287.110:FF:000003">
    <property type="entry name" value="Molecular chaperone DnaJ"/>
    <property type="match status" value="1"/>
</dbReference>
<dbReference type="FunFam" id="2.10.230.10:FF:000002">
    <property type="entry name" value="Molecular chaperone DnaJ"/>
    <property type="match status" value="1"/>
</dbReference>
<dbReference type="FunFam" id="2.60.260.20:FF:000004">
    <property type="entry name" value="Molecular chaperone DnaJ"/>
    <property type="match status" value="1"/>
</dbReference>
<dbReference type="Gene3D" id="1.10.287.110">
    <property type="entry name" value="DnaJ domain"/>
    <property type="match status" value="1"/>
</dbReference>
<dbReference type="Gene3D" id="2.10.230.10">
    <property type="entry name" value="Heat shock protein DnaJ, cysteine-rich domain"/>
    <property type="match status" value="1"/>
</dbReference>
<dbReference type="Gene3D" id="2.60.260.20">
    <property type="entry name" value="Urease metallochaperone UreE, N-terminal domain"/>
    <property type="match status" value="2"/>
</dbReference>
<dbReference type="HAMAP" id="MF_01152">
    <property type="entry name" value="DnaJ"/>
    <property type="match status" value="1"/>
</dbReference>
<dbReference type="InterPro" id="IPR012724">
    <property type="entry name" value="DnaJ"/>
</dbReference>
<dbReference type="InterPro" id="IPR002939">
    <property type="entry name" value="DnaJ_C"/>
</dbReference>
<dbReference type="InterPro" id="IPR001623">
    <property type="entry name" value="DnaJ_domain"/>
</dbReference>
<dbReference type="InterPro" id="IPR018253">
    <property type="entry name" value="DnaJ_domain_CS"/>
</dbReference>
<dbReference type="InterPro" id="IPR008971">
    <property type="entry name" value="HSP40/DnaJ_pept-bd"/>
</dbReference>
<dbReference type="InterPro" id="IPR001305">
    <property type="entry name" value="HSP_DnaJ_Cys-rich_dom"/>
</dbReference>
<dbReference type="InterPro" id="IPR036410">
    <property type="entry name" value="HSP_DnaJ_Cys-rich_dom_sf"/>
</dbReference>
<dbReference type="InterPro" id="IPR036869">
    <property type="entry name" value="J_dom_sf"/>
</dbReference>
<dbReference type="NCBIfam" id="TIGR02349">
    <property type="entry name" value="DnaJ_bact"/>
    <property type="match status" value="1"/>
</dbReference>
<dbReference type="NCBIfam" id="NF008035">
    <property type="entry name" value="PRK10767.1"/>
    <property type="match status" value="1"/>
</dbReference>
<dbReference type="PANTHER" id="PTHR43096:SF48">
    <property type="entry name" value="CHAPERONE PROTEIN DNAJ"/>
    <property type="match status" value="1"/>
</dbReference>
<dbReference type="PANTHER" id="PTHR43096">
    <property type="entry name" value="DNAJ HOMOLOG 1, MITOCHONDRIAL-RELATED"/>
    <property type="match status" value="1"/>
</dbReference>
<dbReference type="Pfam" id="PF00226">
    <property type="entry name" value="DnaJ"/>
    <property type="match status" value="1"/>
</dbReference>
<dbReference type="Pfam" id="PF01556">
    <property type="entry name" value="DnaJ_C"/>
    <property type="match status" value="1"/>
</dbReference>
<dbReference type="Pfam" id="PF00684">
    <property type="entry name" value="DnaJ_CXXCXGXG"/>
    <property type="match status" value="1"/>
</dbReference>
<dbReference type="PRINTS" id="PR00625">
    <property type="entry name" value="JDOMAIN"/>
</dbReference>
<dbReference type="SMART" id="SM00271">
    <property type="entry name" value="DnaJ"/>
    <property type="match status" value="1"/>
</dbReference>
<dbReference type="SUPFAM" id="SSF46565">
    <property type="entry name" value="Chaperone J-domain"/>
    <property type="match status" value="1"/>
</dbReference>
<dbReference type="SUPFAM" id="SSF57938">
    <property type="entry name" value="DnaJ/Hsp40 cysteine-rich domain"/>
    <property type="match status" value="1"/>
</dbReference>
<dbReference type="SUPFAM" id="SSF49493">
    <property type="entry name" value="HSP40/DnaJ peptide-binding domain"/>
    <property type="match status" value="2"/>
</dbReference>
<dbReference type="PROSITE" id="PS00636">
    <property type="entry name" value="DNAJ_1"/>
    <property type="match status" value="1"/>
</dbReference>
<dbReference type="PROSITE" id="PS50076">
    <property type="entry name" value="DNAJ_2"/>
    <property type="match status" value="1"/>
</dbReference>
<dbReference type="PROSITE" id="PS51188">
    <property type="entry name" value="ZF_CR"/>
    <property type="match status" value="1"/>
</dbReference>
<feature type="chain" id="PRO_0000070850" description="Chaperone protein DnaJ">
    <location>
        <begin position="1"/>
        <end position="372"/>
    </location>
</feature>
<feature type="domain" description="J" evidence="1">
    <location>
        <begin position="5"/>
        <end position="70"/>
    </location>
</feature>
<feature type="repeat" description="CXXCXGXG motif">
    <location>
        <begin position="140"/>
        <end position="147"/>
    </location>
</feature>
<feature type="repeat" description="CXXCXGXG motif">
    <location>
        <begin position="157"/>
        <end position="164"/>
    </location>
</feature>
<feature type="repeat" description="CXXCXGXG motif">
    <location>
        <begin position="179"/>
        <end position="186"/>
    </location>
</feature>
<feature type="repeat" description="CXXCXGXG motif">
    <location>
        <begin position="193"/>
        <end position="200"/>
    </location>
</feature>
<feature type="zinc finger region" description="CR-type" evidence="1">
    <location>
        <begin position="127"/>
        <end position="205"/>
    </location>
</feature>
<feature type="binding site" evidence="1">
    <location>
        <position position="140"/>
    </location>
    <ligand>
        <name>Zn(2+)</name>
        <dbReference type="ChEBI" id="CHEBI:29105"/>
        <label>1</label>
    </ligand>
</feature>
<feature type="binding site" evidence="1">
    <location>
        <position position="143"/>
    </location>
    <ligand>
        <name>Zn(2+)</name>
        <dbReference type="ChEBI" id="CHEBI:29105"/>
        <label>1</label>
    </ligand>
</feature>
<feature type="binding site" evidence="1">
    <location>
        <position position="157"/>
    </location>
    <ligand>
        <name>Zn(2+)</name>
        <dbReference type="ChEBI" id="CHEBI:29105"/>
        <label>2</label>
    </ligand>
</feature>
<feature type="binding site" evidence="1">
    <location>
        <position position="160"/>
    </location>
    <ligand>
        <name>Zn(2+)</name>
        <dbReference type="ChEBI" id="CHEBI:29105"/>
        <label>2</label>
    </ligand>
</feature>
<feature type="binding site" evidence="1">
    <location>
        <position position="179"/>
    </location>
    <ligand>
        <name>Zn(2+)</name>
        <dbReference type="ChEBI" id="CHEBI:29105"/>
        <label>2</label>
    </ligand>
</feature>
<feature type="binding site" evidence="1">
    <location>
        <position position="182"/>
    </location>
    <ligand>
        <name>Zn(2+)</name>
        <dbReference type="ChEBI" id="CHEBI:29105"/>
        <label>2</label>
    </ligand>
</feature>
<feature type="binding site" evidence="1">
    <location>
        <position position="193"/>
    </location>
    <ligand>
        <name>Zn(2+)</name>
        <dbReference type="ChEBI" id="CHEBI:29105"/>
        <label>1</label>
    </ligand>
</feature>
<feature type="binding site" evidence="1">
    <location>
        <position position="196"/>
    </location>
    <ligand>
        <name>Zn(2+)</name>
        <dbReference type="ChEBI" id="CHEBI:29105"/>
        <label>1</label>
    </ligand>
</feature>
<sequence>MAKRDYYEVLGVSKTASEKEIKKAYKRLAMKYHPDRNQGDKEAESQFKEVKEAYEILTDDQKRAAYDQYGHAAFEQGGMGGGGADFSDIFGDVFGDIFGGGRRQQRPSRGADLRYSMELTLEEAVRGVTKEIRIPTLETCDICHGSGAKAGTSPVTCSTCQGAGQVHMRQGFFTVQQPCPHCHGRGQIIKDSCHKCHGHGRVERYKTLSVKIPAGVDTGDRVRLSGEGEAGAKGAPAGDLYVQVQVKSHHIFERQESNLYCEVPVNFAMAALGGEIEVPTLDGRVKLKIPAETQTGKMFRMKGKGVKSVRGGVQGDLLCRVVVETPVKLNERQKELLRELGESFGGAGEETNSPRSKSFFDGVKKFFDDLTK</sequence>